<sequence length="367" mass="38522">MTASQRTLMVMAGGTGGHVFPGLAVAHRMEAAGWRVVWLGNPAGMEATLVPKHGIPMEYVRFGGLRGKGLKTKLTLPVNLLRACWQSLGALRRVRPDVVLGMGGYITFPAGVMTALSGRPLVLHEQNSIAGLTNKVLAKLAKRVLVAFPGALPHAEWTGNPIRAELAHTEPPHARYASRSGPLNVLVVGGSLGAAALNEVVPRALALLAPGERPRVVHQAGVKHIEALKANYEAAGFAAGEDVRLVPFIDDMAAAYAAADLVICRSGAMTVSEIAAVGVAALFVPFPYAVDDHQTTNAAFLAEAGAAVLVQQRDLSAELLADWLRGQSRASLADMAERSRALAKPEATDEVARVCAKAAGANLETLQ</sequence>
<dbReference type="EC" id="2.4.1.227" evidence="1"/>
<dbReference type="EMBL" id="CP000458">
    <property type="protein sequence ID" value="ABK07313.1"/>
    <property type="molecule type" value="Genomic_DNA"/>
</dbReference>
<dbReference type="RefSeq" id="WP_011544501.1">
    <property type="nucleotide sequence ID" value="NC_008542.1"/>
</dbReference>
<dbReference type="SMR" id="A0K486"/>
<dbReference type="CAZy" id="GT28">
    <property type="family name" value="Glycosyltransferase Family 28"/>
</dbReference>
<dbReference type="KEGG" id="bch:Bcen2424_0559"/>
<dbReference type="HOGENOM" id="CLU_037404_2_0_4"/>
<dbReference type="UniPathway" id="UPA00219"/>
<dbReference type="GO" id="GO:0005886">
    <property type="term" value="C:plasma membrane"/>
    <property type="evidence" value="ECO:0007669"/>
    <property type="project" value="UniProtKB-SubCell"/>
</dbReference>
<dbReference type="GO" id="GO:0051991">
    <property type="term" value="F:UDP-N-acetyl-D-glucosamine:N-acetylmuramoyl-L-alanyl-D-glutamyl-meso-2,6-diaminopimelyl-D-alanyl-D-alanine-diphosphoundecaprenol 4-beta-N-acetylglucosaminlytransferase activity"/>
    <property type="evidence" value="ECO:0007669"/>
    <property type="project" value="RHEA"/>
</dbReference>
<dbReference type="GO" id="GO:0050511">
    <property type="term" value="F:undecaprenyldiphospho-muramoylpentapeptide beta-N-acetylglucosaminyltransferase activity"/>
    <property type="evidence" value="ECO:0007669"/>
    <property type="project" value="UniProtKB-UniRule"/>
</dbReference>
<dbReference type="GO" id="GO:0005975">
    <property type="term" value="P:carbohydrate metabolic process"/>
    <property type="evidence" value="ECO:0007669"/>
    <property type="project" value="InterPro"/>
</dbReference>
<dbReference type="GO" id="GO:0051301">
    <property type="term" value="P:cell division"/>
    <property type="evidence" value="ECO:0007669"/>
    <property type="project" value="UniProtKB-KW"/>
</dbReference>
<dbReference type="GO" id="GO:0071555">
    <property type="term" value="P:cell wall organization"/>
    <property type="evidence" value="ECO:0007669"/>
    <property type="project" value="UniProtKB-KW"/>
</dbReference>
<dbReference type="GO" id="GO:0030259">
    <property type="term" value="P:lipid glycosylation"/>
    <property type="evidence" value="ECO:0007669"/>
    <property type="project" value="UniProtKB-UniRule"/>
</dbReference>
<dbReference type="GO" id="GO:0009252">
    <property type="term" value="P:peptidoglycan biosynthetic process"/>
    <property type="evidence" value="ECO:0007669"/>
    <property type="project" value="UniProtKB-UniRule"/>
</dbReference>
<dbReference type="GO" id="GO:0008360">
    <property type="term" value="P:regulation of cell shape"/>
    <property type="evidence" value="ECO:0007669"/>
    <property type="project" value="UniProtKB-KW"/>
</dbReference>
<dbReference type="CDD" id="cd03785">
    <property type="entry name" value="GT28_MurG"/>
    <property type="match status" value="1"/>
</dbReference>
<dbReference type="Gene3D" id="3.40.50.2000">
    <property type="entry name" value="Glycogen Phosphorylase B"/>
    <property type="match status" value="2"/>
</dbReference>
<dbReference type="HAMAP" id="MF_00033">
    <property type="entry name" value="MurG"/>
    <property type="match status" value="1"/>
</dbReference>
<dbReference type="InterPro" id="IPR006009">
    <property type="entry name" value="GlcNAc_MurG"/>
</dbReference>
<dbReference type="InterPro" id="IPR007235">
    <property type="entry name" value="Glyco_trans_28_C"/>
</dbReference>
<dbReference type="InterPro" id="IPR004276">
    <property type="entry name" value="GlycoTrans_28_N"/>
</dbReference>
<dbReference type="NCBIfam" id="TIGR01133">
    <property type="entry name" value="murG"/>
    <property type="match status" value="1"/>
</dbReference>
<dbReference type="PANTHER" id="PTHR21015:SF22">
    <property type="entry name" value="GLYCOSYLTRANSFERASE"/>
    <property type="match status" value="1"/>
</dbReference>
<dbReference type="PANTHER" id="PTHR21015">
    <property type="entry name" value="UDP-N-ACETYLGLUCOSAMINE--N-ACETYLMURAMYL-(PENTAPEPTIDE) PYROPHOSPHORYL-UNDECAPRENOL N-ACETYLGLUCOSAMINE TRANSFERASE 1"/>
    <property type="match status" value="1"/>
</dbReference>
<dbReference type="Pfam" id="PF04101">
    <property type="entry name" value="Glyco_tran_28_C"/>
    <property type="match status" value="1"/>
</dbReference>
<dbReference type="Pfam" id="PF03033">
    <property type="entry name" value="Glyco_transf_28"/>
    <property type="match status" value="1"/>
</dbReference>
<dbReference type="SUPFAM" id="SSF53756">
    <property type="entry name" value="UDP-Glycosyltransferase/glycogen phosphorylase"/>
    <property type="match status" value="1"/>
</dbReference>
<proteinExistence type="inferred from homology"/>
<name>MURG_BURCH</name>
<keyword id="KW-0131">Cell cycle</keyword>
<keyword id="KW-0132">Cell division</keyword>
<keyword id="KW-0997">Cell inner membrane</keyword>
<keyword id="KW-1003">Cell membrane</keyword>
<keyword id="KW-0133">Cell shape</keyword>
<keyword id="KW-0961">Cell wall biogenesis/degradation</keyword>
<keyword id="KW-0328">Glycosyltransferase</keyword>
<keyword id="KW-0472">Membrane</keyword>
<keyword id="KW-0573">Peptidoglycan synthesis</keyword>
<keyword id="KW-0808">Transferase</keyword>
<comment type="function">
    <text evidence="1">Cell wall formation. Catalyzes the transfer of a GlcNAc subunit on undecaprenyl-pyrophosphoryl-MurNAc-pentapeptide (lipid intermediate I) to form undecaprenyl-pyrophosphoryl-MurNAc-(pentapeptide)GlcNAc (lipid intermediate II).</text>
</comment>
<comment type="catalytic activity">
    <reaction evidence="1">
        <text>di-trans,octa-cis-undecaprenyl diphospho-N-acetyl-alpha-D-muramoyl-L-alanyl-D-glutamyl-meso-2,6-diaminopimeloyl-D-alanyl-D-alanine + UDP-N-acetyl-alpha-D-glucosamine = di-trans,octa-cis-undecaprenyl diphospho-[N-acetyl-alpha-D-glucosaminyl-(1-&gt;4)]-N-acetyl-alpha-D-muramoyl-L-alanyl-D-glutamyl-meso-2,6-diaminopimeloyl-D-alanyl-D-alanine + UDP + H(+)</text>
        <dbReference type="Rhea" id="RHEA:31227"/>
        <dbReference type="ChEBI" id="CHEBI:15378"/>
        <dbReference type="ChEBI" id="CHEBI:57705"/>
        <dbReference type="ChEBI" id="CHEBI:58223"/>
        <dbReference type="ChEBI" id="CHEBI:61387"/>
        <dbReference type="ChEBI" id="CHEBI:61388"/>
        <dbReference type="EC" id="2.4.1.227"/>
    </reaction>
</comment>
<comment type="pathway">
    <text evidence="1">Cell wall biogenesis; peptidoglycan biosynthesis.</text>
</comment>
<comment type="subcellular location">
    <subcellularLocation>
        <location evidence="1">Cell inner membrane</location>
        <topology evidence="1">Peripheral membrane protein</topology>
        <orientation evidence="1">Cytoplasmic side</orientation>
    </subcellularLocation>
</comment>
<comment type="similarity">
    <text evidence="1">Belongs to the glycosyltransferase 28 family. MurG subfamily.</text>
</comment>
<evidence type="ECO:0000255" key="1">
    <source>
        <dbReference type="HAMAP-Rule" id="MF_00033"/>
    </source>
</evidence>
<feature type="chain" id="PRO_1000002622" description="UDP-N-acetylglucosamine--N-acetylmuramyl-(pentapeptide) pyrophosphoryl-undecaprenol N-acetylglucosamine transferase">
    <location>
        <begin position="1"/>
        <end position="367"/>
    </location>
</feature>
<feature type="binding site" evidence="1">
    <location>
        <begin position="15"/>
        <end position="17"/>
    </location>
    <ligand>
        <name>UDP-N-acetyl-alpha-D-glucosamine</name>
        <dbReference type="ChEBI" id="CHEBI:57705"/>
    </ligand>
</feature>
<feature type="binding site" evidence="1">
    <location>
        <position position="127"/>
    </location>
    <ligand>
        <name>UDP-N-acetyl-alpha-D-glucosamine</name>
        <dbReference type="ChEBI" id="CHEBI:57705"/>
    </ligand>
</feature>
<feature type="binding site" evidence="1">
    <location>
        <position position="163"/>
    </location>
    <ligand>
        <name>UDP-N-acetyl-alpha-D-glucosamine</name>
        <dbReference type="ChEBI" id="CHEBI:57705"/>
    </ligand>
</feature>
<feature type="binding site" evidence="1">
    <location>
        <position position="191"/>
    </location>
    <ligand>
        <name>UDP-N-acetyl-alpha-D-glucosamine</name>
        <dbReference type="ChEBI" id="CHEBI:57705"/>
    </ligand>
</feature>
<feature type="binding site" evidence="1">
    <location>
        <position position="249"/>
    </location>
    <ligand>
        <name>UDP-N-acetyl-alpha-D-glucosamine</name>
        <dbReference type="ChEBI" id="CHEBI:57705"/>
    </ligand>
</feature>
<feature type="binding site" evidence="1">
    <location>
        <position position="294"/>
    </location>
    <ligand>
        <name>UDP-N-acetyl-alpha-D-glucosamine</name>
        <dbReference type="ChEBI" id="CHEBI:57705"/>
    </ligand>
</feature>
<organism>
    <name type="scientific">Burkholderia cenocepacia (strain HI2424)</name>
    <dbReference type="NCBI Taxonomy" id="331272"/>
    <lineage>
        <taxon>Bacteria</taxon>
        <taxon>Pseudomonadati</taxon>
        <taxon>Pseudomonadota</taxon>
        <taxon>Betaproteobacteria</taxon>
        <taxon>Burkholderiales</taxon>
        <taxon>Burkholderiaceae</taxon>
        <taxon>Burkholderia</taxon>
        <taxon>Burkholderia cepacia complex</taxon>
    </lineage>
</organism>
<gene>
    <name evidence="1" type="primary">murG</name>
    <name type="ordered locus">Bcen2424_0559</name>
</gene>
<accession>A0K486</accession>
<reference key="1">
    <citation type="submission" date="2006-08" db="EMBL/GenBank/DDBJ databases">
        <title>Complete sequence of chromosome 1 of Burkholderia cenocepacia HI2424.</title>
        <authorList>
            <person name="Copeland A."/>
            <person name="Lucas S."/>
            <person name="Lapidus A."/>
            <person name="Barry K."/>
            <person name="Detter J.C."/>
            <person name="Glavina del Rio T."/>
            <person name="Hammon N."/>
            <person name="Israni S."/>
            <person name="Pitluck S."/>
            <person name="Chain P."/>
            <person name="Malfatti S."/>
            <person name="Shin M."/>
            <person name="Vergez L."/>
            <person name="Schmutz J."/>
            <person name="Larimer F."/>
            <person name="Land M."/>
            <person name="Hauser L."/>
            <person name="Kyrpides N."/>
            <person name="Kim E."/>
            <person name="LiPuma J.J."/>
            <person name="Gonzalez C.F."/>
            <person name="Konstantinidis K."/>
            <person name="Tiedje J.M."/>
            <person name="Richardson P."/>
        </authorList>
    </citation>
    <scope>NUCLEOTIDE SEQUENCE [LARGE SCALE GENOMIC DNA]</scope>
    <source>
        <strain>HI2424</strain>
    </source>
</reference>
<protein>
    <recommendedName>
        <fullName evidence="1">UDP-N-acetylglucosamine--N-acetylmuramyl-(pentapeptide) pyrophosphoryl-undecaprenol N-acetylglucosamine transferase</fullName>
        <ecNumber evidence="1">2.4.1.227</ecNumber>
    </recommendedName>
    <alternativeName>
        <fullName evidence="1">Undecaprenyl-PP-MurNAc-pentapeptide-UDPGlcNAc GlcNAc transferase</fullName>
    </alternativeName>
</protein>